<keyword id="KW-0378">Hydrolase</keyword>
<keyword id="KW-0460">Magnesium</keyword>
<keyword id="KW-0479">Metal-binding</keyword>
<keyword id="KW-0546">Nucleotide metabolism</keyword>
<keyword id="KW-1185">Reference proteome</keyword>
<comment type="function">
    <text evidence="1">This enzyme is involved in nucleotide metabolism: it produces dUMP, the immediate precursor of thymidine nucleotides and it decreases the intracellular concentration of dUTP so that uracil cannot be incorporated into DNA.</text>
</comment>
<comment type="catalytic activity">
    <reaction evidence="1">
        <text>dUTP + H2O = dUMP + diphosphate + H(+)</text>
        <dbReference type="Rhea" id="RHEA:10248"/>
        <dbReference type="ChEBI" id="CHEBI:15377"/>
        <dbReference type="ChEBI" id="CHEBI:15378"/>
        <dbReference type="ChEBI" id="CHEBI:33019"/>
        <dbReference type="ChEBI" id="CHEBI:61555"/>
        <dbReference type="ChEBI" id="CHEBI:246422"/>
        <dbReference type="EC" id="3.6.1.23"/>
    </reaction>
</comment>
<comment type="cofactor">
    <cofactor evidence="1">
        <name>Mg(2+)</name>
        <dbReference type="ChEBI" id="CHEBI:18420"/>
    </cofactor>
</comment>
<comment type="pathway">
    <text evidence="1">Pyrimidine metabolism; dUMP biosynthesis; dUMP from dCTP (dUTP route): step 2/2.</text>
</comment>
<comment type="similarity">
    <text evidence="1">Belongs to the dUTPase family.</text>
</comment>
<sequence length="151" mass="16084">MHALQAKILDPRIGNEFPLPAYATVGSAGLDLRAMLKEDTLLEPGQTLLIPTGLSIYIGDPGLAALILPRSGLGHKHGIVLGNLVGLIDSDYQGELMVSCWNRGQTAFTIAVGERIAQLVLVPVVQARFELVEEFDESQRGTGGFGHSGSH</sequence>
<organism>
    <name type="scientific">Pseudomonas syringae pv. tomato (strain ATCC BAA-871 / DC3000)</name>
    <dbReference type="NCBI Taxonomy" id="223283"/>
    <lineage>
        <taxon>Bacteria</taxon>
        <taxon>Pseudomonadati</taxon>
        <taxon>Pseudomonadota</taxon>
        <taxon>Gammaproteobacteria</taxon>
        <taxon>Pseudomonadales</taxon>
        <taxon>Pseudomonadaceae</taxon>
        <taxon>Pseudomonas</taxon>
    </lineage>
</organism>
<accession>Q88BD3</accession>
<evidence type="ECO:0000255" key="1">
    <source>
        <dbReference type="HAMAP-Rule" id="MF_00116"/>
    </source>
</evidence>
<protein>
    <recommendedName>
        <fullName evidence="1">Deoxyuridine 5'-triphosphate nucleotidohydrolase</fullName>
        <shortName evidence="1">dUTPase</shortName>
        <ecNumber evidence="1">3.6.1.23</ecNumber>
    </recommendedName>
    <alternativeName>
        <fullName evidence="1">dUTP pyrophosphatase</fullName>
    </alternativeName>
</protein>
<gene>
    <name evidence="1" type="primary">dut</name>
    <name type="ordered locus">PSPTO_0084</name>
</gene>
<dbReference type="EC" id="3.6.1.23" evidence="1"/>
<dbReference type="EMBL" id="AE016853">
    <property type="protein sequence ID" value="AAO53638.1"/>
    <property type="molecule type" value="Genomic_DNA"/>
</dbReference>
<dbReference type="RefSeq" id="NP_789943.1">
    <property type="nucleotide sequence ID" value="NC_004578.1"/>
</dbReference>
<dbReference type="RefSeq" id="WP_011102984.1">
    <property type="nucleotide sequence ID" value="NC_004578.1"/>
</dbReference>
<dbReference type="SMR" id="Q88BD3"/>
<dbReference type="STRING" id="223283.PSPTO_0084"/>
<dbReference type="GeneID" id="1181692"/>
<dbReference type="KEGG" id="pst:PSPTO_0084"/>
<dbReference type="PATRIC" id="fig|223283.9.peg.88"/>
<dbReference type="eggNOG" id="COG0756">
    <property type="taxonomic scope" value="Bacteria"/>
</dbReference>
<dbReference type="HOGENOM" id="CLU_068508_1_1_6"/>
<dbReference type="OrthoDB" id="9809956at2"/>
<dbReference type="PhylomeDB" id="Q88BD3"/>
<dbReference type="UniPathway" id="UPA00610">
    <property type="reaction ID" value="UER00666"/>
</dbReference>
<dbReference type="Proteomes" id="UP000002515">
    <property type="component" value="Chromosome"/>
</dbReference>
<dbReference type="GO" id="GO:0004170">
    <property type="term" value="F:dUTP diphosphatase activity"/>
    <property type="evidence" value="ECO:0007669"/>
    <property type="project" value="UniProtKB-UniRule"/>
</dbReference>
<dbReference type="GO" id="GO:0000287">
    <property type="term" value="F:magnesium ion binding"/>
    <property type="evidence" value="ECO:0007669"/>
    <property type="project" value="UniProtKB-UniRule"/>
</dbReference>
<dbReference type="GO" id="GO:0006226">
    <property type="term" value="P:dUMP biosynthetic process"/>
    <property type="evidence" value="ECO:0007669"/>
    <property type="project" value="UniProtKB-UniRule"/>
</dbReference>
<dbReference type="GO" id="GO:0046081">
    <property type="term" value="P:dUTP catabolic process"/>
    <property type="evidence" value="ECO:0007669"/>
    <property type="project" value="InterPro"/>
</dbReference>
<dbReference type="CDD" id="cd07557">
    <property type="entry name" value="trimeric_dUTPase"/>
    <property type="match status" value="1"/>
</dbReference>
<dbReference type="FunFam" id="2.70.40.10:FF:000002">
    <property type="entry name" value="dUTP diphosphatase"/>
    <property type="match status" value="1"/>
</dbReference>
<dbReference type="Gene3D" id="2.70.40.10">
    <property type="match status" value="1"/>
</dbReference>
<dbReference type="HAMAP" id="MF_00116">
    <property type="entry name" value="dUTPase_bact"/>
    <property type="match status" value="1"/>
</dbReference>
<dbReference type="InterPro" id="IPR008181">
    <property type="entry name" value="dUTPase"/>
</dbReference>
<dbReference type="InterPro" id="IPR029054">
    <property type="entry name" value="dUTPase-like"/>
</dbReference>
<dbReference type="InterPro" id="IPR036157">
    <property type="entry name" value="dUTPase-like_sf"/>
</dbReference>
<dbReference type="InterPro" id="IPR033704">
    <property type="entry name" value="dUTPase_trimeric"/>
</dbReference>
<dbReference type="NCBIfam" id="TIGR00576">
    <property type="entry name" value="dut"/>
    <property type="match status" value="1"/>
</dbReference>
<dbReference type="NCBIfam" id="NF001862">
    <property type="entry name" value="PRK00601.1"/>
    <property type="match status" value="1"/>
</dbReference>
<dbReference type="PANTHER" id="PTHR11241">
    <property type="entry name" value="DEOXYURIDINE 5'-TRIPHOSPHATE NUCLEOTIDOHYDROLASE"/>
    <property type="match status" value="1"/>
</dbReference>
<dbReference type="PANTHER" id="PTHR11241:SF0">
    <property type="entry name" value="DEOXYURIDINE 5'-TRIPHOSPHATE NUCLEOTIDOHYDROLASE"/>
    <property type="match status" value="1"/>
</dbReference>
<dbReference type="Pfam" id="PF00692">
    <property type="entry name" value="dUTPase"/>
    <property type="match status" value="1"/>
</dbReference>
<dbReference type="SUPFAM" id="SSF51283">
    <property type="entry name" value="dUTPase-like"/>
    <property type="match status" value="1"/>
</dbReference>
<name>DUT_PSESM</name>
<reference key="1">
    <citation type="journal article" date="2003" name="Proc. Natl. Acad. Sci. U.S.A.">
        <title>The complete genome sequence of the Arabidopsis and tomato pathogen Pseudomonas syringae pv. tomato DC3000.</title>
        <authorList>
            <person name="Buell C.R."/>
            <person name="Joardar V."/>
            <person name="Lindeberg M."/>
            <person name="Selengut J."/>
            <person name="Paulsen I.T."/>
            <person name="Gwinn M.L."/>
            <person name="Dodson R.J."/>
            <person name="DeBoy R.T."/>
            <person name="Durkin A.S."/>
            <person name="Kolonay J.F."/>
            <person name="Madupu R."/>
            <person name="Daugherty S.C."/>
            <person name="Brinkac L.M."/>
            <person name="Beanan M.J."/>
            <person name="Haft D.H."/>
            <person name="Nelson W.C."/>
            <person name="Davidsen T.M."/>
            <person name="Zafar N."/>
            <person name="Zhou L."/>
            <person name="Liu J."/>
            <person name="Yuan Q."/>
            <person name="Khouri H.M."/>
            <person name="Fedorova N.B."/>
            <person name="Tran B."/>
            <person name="Russell D."/>
            <person name="Berry K.J."/>
            <person name="Utterback T.R."/>
            <person name="Van Aken S.E."/>
            <person name="Feldblyum T.V."/>
            <person name="D'Ascenzo M."/>
            <person name="Deng W.-L."/>
            <person name="Ramos A.R."/>
            <person name="Alfano J.R."/>
            <person name="Cartinhour S."/>
            <person name="Chatterjee A.K."/>
            <person name="Delaney T.P."/>
            <person name="Lazarowitz S.G."/>
            <person name="Martin G.B."/>
            <person name="Schneider D.J."/>
            <person name="Tang X."/>
            <person name="Bender C.L."/>
            <person name="White O."/>
            <person name="Fraser C.M."/>
            <person name="Collmer A."/>
        </authorList>
    </citation>
    <scope>NUCLEOTIDE SEQUENCE [LARGE SCALE GENOMIC DNA]</scope>
    <source>
        <strain>ATCC BAA-871 / DC3000</strain>
    </source>
</reference>
<feature type="chain" id="PRO_0000182897" description="Deoxyuridine 5'-triphosphate nucleotidohydrolase">
    <location>
        <begin position="1"/>
        <end position="151"/>
    </location>
</feature>
<feature type="binding site" evidence="1">
    <location>
        <begin position="70"/>
        <end position="72"/>
    </location>
    <ligand>
        <name>substrate</name>
    </ligand>
</feature>
<feature type="binding site" evidence="1">
    <location>
        <position position="83"/>
    </location>
    <ligand>
        <name>substrate</name>
    </ligand>
</feature>
<feature type="binding site" evidence="1">
    <location>
        <begin position="87"/>
        <end position="89"/>
    </location>
    <ligand>
        <name>substrate</name>
    </ligand>
</feature>
<feature type="binding site" evidence="1">
    <location>
        <position position="97"/>
    </location>
    <ligand>
        <name>substrate</name>
    </ligand>
</feature>
<proteinExistence type="inferred from homology"/>